<evidence type="ECO:0000255" key="1">
    <source>
        <dbReference type="HAMAP-Rule" id="MF_01318"/>
    </source>
</evidence>
<evidence type="ECO:0000305" key="2"/>
<organism>
    <name type="scientific">Bacillus cereus (strain G9842)</name>
    <dbReference type="NCBI Taxonomy" id="405531"/>
    <lineage>
        <taxon>Bacteria</taxon>
        <taxon>Bacillati</taxon>
        <taxon>Bacillota</taxon>
        <taxon>Bacilli</taxon>
        <taxon>Bacillales</taxon>
        <taxon>Bacillaceae</taxon>
        <taxon>Bacillus</taxon>
        <taxon>Bacillus cereus group</taxon>
    </lineage>
</organism>
<name>RL1_BACC2</name>
<comment type="function">
    <text evidence="1">Binds directly to 23S rRNA. The L1 stalk is quite mobile in the ribosome, and is involved in E site tRNA release.</text>
</comment>
<comment type="function">
    <text evidence="1">Protein L1 is also a translational repressor protein, it controls the translation of the L11 operon by binding to its mRNA.</text>
</comment>
<comment type="subunit">
    <text evidence="1">Part of the 50S ribosomal subunit.</text>
</comment>
<comment type="similarity">
    <text evidence="1">Belongs to the universal ribosomal protein uL1 family.</text>
</comment>
<sequence>MAKRGKKYVEAAKLVDRAAAYSATEAVELVKKTNTAKFDATVEAAFRLGVDPKKADQQIRGAVVLPHGTGKVQRVLVFAKGEKAKEAEAAGADFVGDTDYIGKIQQGWFDFDVVVATPDMMGEVGKLGRVLGPKGLMPNPKTGTVTFDVTKAVNEIKAGKVEYRVDKAGNIHVPIGKVSFEDAKLVENFKTIADTLLKVKPSAAKGTYMKNVTVASTMGPGVRVDVSTLA</sequence>
<feature type="chain" id="PRO_1000141358" description="Large ribosomal subunit protein uL1">
    <location>
        <begin position="1"/>
        <end position="230"/>
    </location>
</feature>
<proteinExistence type="inferred from homology"/>
<keyword id="KW-0678">Repressor</keyword>
<keyword id="KW-0687">Ribonucleoprotein</keyword>
<keyword id="KW-0689">Ribosomal protein</keyword>
<keyword id="KW-0694">RNA-binding</keyword>
<keyword id="KW-0699">rRNA-binding</keyword>
<keyword id="KW-0810">Translation regulation</keyword>
<keyword id="KW-0820">tRNA-binding</keyword>
<protein>
    <recommendedName>
        <fullName evidence="1">Large ribosomal subunit protein uL1</fullName>
    </recommendedName>
    <alternativeName>
        <fullName evidence="2">50S ribosomal protein L1</fullName>
    </alternativeName>
</protein>
<gene>
    <name evidence="1" type="primary">rplA</name>
    <name type="ordered locus">BCG9842_B5208</name>
</gene>
<accession>B7IT07</accession>
<dbReference type="EMBL" id="CP001186">
    <property type="protein sequence ID" value="ACK97244.1"/>
    <property type="molecule type" value="Genomic_DNA"/>
</dbReference>
<dbReference type="RefSeq" id="WP_002084079.1">
    <property type="nucleotide sequence ID" value="NC_011772.1"/>
</dbReference>
<dbReference type="SMR" id="B7IT07"/>
<dbReference type="KEGG" id="bcg:BCG9842_B5208"/>
<dbReference type="HOGENOM" id="CLU_062853_0_0_9"/>
<dbReference type="Proteomes" id="UP000006744">
    <property type="component" value="Chromosome"/>
</dbReference>
<dbReference type="GO" id="GO:0015934">
    <property type="term" value="C:large ribosomal subunit"/>
    <property type="evidence" value="ECO:0007669"/>
    <property type="project" value="InterPro"/>
</dbReference>
<dbReference type="GO" id="GO:0019843">
    <property type="term" value="F:rRNA binding"/>
    <property type="evidence" value="ECO:0007669"/>
    <property type="project" value="UniProtKB-UniRule"/>
</dbReference>
<dbReference type="GO" id="GO:0003735">
    <property type="term" value="F:structural constituent of ribosome"/>
    <property type="evidence" value="ECO:0007669"/>
    <property type="project" value="InterPro"/>
</dbReference>
<dbReference type="GO" id="GO:0000049">
    <property type="term" value="F:tRNA binding"/>
    <property type="evidence" value="ECO:0007669"/>
    <property type="project" value="UniProtKB-KW"/>
</dbReference>
<dbReference type="GO" id="GO:0006417">
    <property type="term" value="P:regulation of translation"/>
    <property type="evidence" value="ECO:0007669"/>
    <property type="project" value="UniProtKB-KW"/>
</dbReference>
<dbReference type="GO" id="GO:0006412">
    <property type="term" value="P:translation"/>
    <property type="evidence" value="ECO:0007669"/>
    <property type="project" value="UniProtKB-UniRule"/>
</dbReference>
<dbReference type="CDD" id="cd00403">
    <property type="entry name" value="Ribosomal_L1"/>
    <property type="match status" value="1"/>
</dbReference>
<dbReference type="FunFam" id="3.40.50.790:FF:000001">
    <property type="entry name" value="50S ribosomal protein L1"/>
    <property type="match status" value="1"/>
</dbReference>
<dbReference type="Gene3D" id="3.30.190.20">
    <property type="match status" value="1"/>
</dbReference>
<dbReference type="Gene3D" id="3.40.50.790">
    <property type="match status" value="1"/>
</dbReference>
<dbReference type="HAMAP" id="MF_01318_B">
    <property type="entry name" value="Ribosomal_uL1_B"/>
    <property type="match status" value="1"/>
</dbReference>
<dbReference type="InterPro" id="IPR005878">
    <property type="entry name" value="Ribosom_uL1_bac-type"/>
</dbReference>
<dbReference type="InterPro" id="IPR002143">
    <property type="entry name" value="Ribosomal_uL1"/>
</dbReference>
<dbReference type="InterPro" id="IPR023674">
    <property type="entry name" value="Ribosomal_uL1-like"/>
</dbReference>
<dbReference type="InterPro" id="IPR028364">
    <property type="entry name" value="Ribosomal_uL1/biogenesis"/>
</dbReference>
<dbReference type="InterPro" id="IPR016095">
    <property type="entry name" value="Ribosomal_uL1_3-a/b-sand"/>
</dbReference>
<dbReference type="InterPro" id="IPR023673">
    <property type="entry name" value="Ribosomal_uL1_CS"/>
</dbReference>
<dbReference type="NCBIfam" id="TIGR01169">
    <property type="entry name" value="rplA_bact"/>
    <property type="match status" value="1"/>
</dbReference>
<dbReference type="PANTHER" id="PTHR36427">
    <property type="entry name" value="54S RIBOSOMAL PROTEIN L1, MITOCHONDRIAL"/>
    <property type="match status" value="1"/>
</dbReference>
<dbReference type="PANTHER" id="PTHR36427:SF3">
    <property type="entry name" value="LARGE RIBOSOMAL SUBUNIT PROTEIN UL1M"/>
    <property type="match status" value="1"/>
</dbReference>
<dbReference type="Pfam" id="PF00687">
    <property type="entry name" value="Ribosomal_L1"/>
    <property type="match status" value="1"/>
</dbReference>
<dbReference type="PIRSF" id="PIRSF002155">
    <property type="entry name" value="Ribosomal_L1"/>
    <property type="match status" value="1"/>
</dbReference>
<dbReference type="SUPFAM" id="SSF56808">
    <property type="entry name" value="Ribosomal protein L1"/>
    <property type="match status" value="1"/>
</dbReference>
<dbReference type="PROSITE" id="PS01199">
    <property type="entry name" value="RIBOSOMAL_L1"/>
    <property type="match status" value="1"/>
</dbReference>
<reference key="1">
    <citation type="submission" date="2008-10" db="EMBL/GenBank/DDBJ databases">
        <title>Genome sequence of Bacillus cereus G9842.</title>
        <authorList>
            <person name="Dodson R.J."/>
            <person name="Durkin A.S."/>
            <person name="Rosovitz M.J."/>
            <person name="Rasko D.A."/>
            <person name="Hoffmaster A."/>
            <person name="Ravel J."/>
            <person name="Sutton G."/>
        </authorList>
    </citation>
    <scope>NUCLEOTIDE SEQUENCE [LARGE SCALE GENOMIC DNA]</scope>
    <source>
        <strain>G9842</strain>
    </source>
</reference>